<feature type="chain" id="PRO_0000330793" description="Transcription factor TCP19">
    <location>
        <begin position="1"/>
        <end position="293"/>
    </location>
</feature>
<feature type="domain" description="TCP" evidence="1">
    <location>
        <begin position="57"/>
        <end position="111"/>
    </location>
</feature>
<feature type="region of interest" description="Disordered" evidence="2">
    <location>
        <begin position="45"/>
        <end position="67"/>
    </location>
</feature>
<feature type="compositionally biased region" description="Basic and acidic residues" evidence="2">
    <location>
        <begin position="56"/>
        <end position="67"/>
    </location>
</feature>
<feature type="sequence conflict" description="In Ref. 5; AAM64446." evidence="3" ref="5">
    <original>I</original>
    <variation>M</variation>
    <location>
        <position position="149"/>
    </location>
</feature>
<feature type="sequence conflict" description="In Ref. 5; AAM64446." evidence="3" ref="5">
    <original>F</original>
    <variation>Y</variation>
    <location>
        <position position="208"/>
    </location>
</feature>
<keyword id="KW-0238">DNA-binding</keyword>
<keyword id="KW-0539">Nucleus</keyword>
<keyword id="KW-1185">Reference proteome</keyword>
<keyword id="KW-0804">Transcription</keyword>
<keyword id="KW-0805">Transcription regulation</keyword>
<evidence type="ECO:0000255" key="1">
    <source>
        <dbReference type="PROSITE-ProRule" id="PRU00701"/>
    </source>
</evidence>
<evidence type="ECO:0000256" key="2">
    <source>
        <dbReference type="SAM" id="MobiDB-lite"/>
    </source>
</evidence>
<evidence type="ECO:0000305" key="3"/>
<reference key="1">
    <citation type="journal article" date="2000" name="DNA Res.">
        <title>Structural analysis of Arabidopsis thaliana chromosome 5. X. Sequence features of the regions of 3,076,755 bp covered by sixty P1 and TAC clones.</title>
        <authorList>
            <person name="Sato S."/>
            <person name="Nakamura Y."/>
            <person name="Kaneko T."/>
            <person name="Katoh T."/>
            <person name="Asamizu E."/>
            <person name="Kotani H."/>
            <person name="Tabata S."/>
        </authorList>
    </citation>
    <scope>NUCLEOTIDE SEQUENCE [LARGE SCALE GENOMIC DNA]</scope>
    <source>
        <strain>cv. Columbia</strain>
    </source>
</reference>
<reference key="2">
    <citation type="journal article" date="2017" name="Plant J.">
        <title>Araport11: a complete reannotation of the Arabidopsis thaliana reference genome.</title>
        <authorList>
            <person name="Cheng C.Y."/>
            <person name="Krishnakumar V."/>
            <person name="Chan A.P."/>
            <person name="Thibaud-Nissen F."/>
            <person name="Schobel S."/>
            <person name="Town C.D."/>
        </authorList>
    </citation>
    <scope>GENOME REANNOTATION</scope>
    <source>
        <strain>cv. Columbia</strain>
    </source>
</reference>
<reference key="3">
    <citation type="journal article" date="2002" name="Science">
        <title>Functional annotation of a full-length Arabidopsis cDNA collection.</title>
        <authorList>
            <person name="Seki M."/>
            <person name="Narusaka M."/>
            <person name="Kamiya A."/>
            <person name="Ishida J."/>
            <person name="Satou M."/>
            <person name="Sakurai T."/>
            <person name="Nakajima M."/>
            <person name="Enju A."/>
            <person name="Akiyama K."/>
            <person name="Oono Y."/>
            <person name="Muramatsu M."/>
            <person name="Hayashizaki Y."/>
            <person name="Kawai J."/>
            <person name="Carninci P."/>
            <person name="Itoh M."/>
            <person name="Ishii Y."/>
            <person name="Arakawa T."/>
            <person name="Shibata K."/>
            <person name="Shinagawa A."/>
            <person name="Shinozaki K."/>
        </authorList>
    </citation>
    <scope>NUCLEOTIDE SEQUENCE [LARGE SCALE MRNA]</scope>
    <source>
        <strain>cv. Columbia</strain>
    </source>
</reference>
<reference key="4">
    <citation type="journal article" date="2003" name="Science">
        <title>Empirical analysis of transcriptional activity in the Arabidopsis genome.</title>
        <authorList>
            <person name="Yamada K."/>
            <person name="Lim J."/>
            <person name="Dale J.M."/>
            <person name="Chen H."/>
            <person name="Shinn P."/>
            <person name="Palm C.J."/>
            <person name="Southwick A.M."/>
            <person name="Wu H.C."/>
            <person name="Kim C.J."/>
            <person name="Nguyen M."/>
            <person name="Pham P.K."/>
            <person name="Cheuk R.F."/>
            <person name="Karlin-Newmann G."/>
            <person name="Liu S.X."/>
            <person name="Lam B."/>
            <person name="Sakano H."/>
            <person name="Wu T."/>
            <person name="Yu G."/>
            <person name="Miranda M."/>
            <person name="Quach H.L."/>
            <person name="Tripp M."/>
            <person name="Chang C.H."/>
            <person name="Lee J.M."/>
            <person name="Toriumi M.J."/>
            <person name="Chan M.M."/>
            <person name="Tang C.C."/>
            <person name="Onodera C.S."/>
            <person name="Deng J.M."/>
            <person name="Akiyama K."/>
            <person name="Ansari Y."/>
            <person name="Arakawa T."/>
            <person name="Banh J."/>
            <person name="Banno F."/>
            <person name="Bowser L."/>
            <person name="Brooks S.Y."/>
            <person name="Carninci P."/>
            <person name="Chao Q."/>
            <person name="Choy N."/>
            <person name="Enju A."/>
            <person name="Goldsmith A.D."/>
            <person name="Gurjal M."/>
            <person name="Hansen N.F."/>
            <person name="Hayashizaki Y."/>
            <person name="Johnson-Hopson C."/>
            <person name="Hsuan V.W."/>
            <person name="Iida K."/>
            <person name="Karnes M."/>
            <person name="Khan S."/>
            <person name="Koesema E."/>
            <person name="Ishida J."/>
            <person name="Jiang P.X."/>
            <person name="Jones T."/>
            <person name="Kawai J."/>
            <person name="Kamiya A."/>
            <person name="Meyers C."/>
            <person name="Nakajima M."/>
            <person name="Narusaka M."/>
            <person name="Seki M."/>
            <person name="Sakurai T."/>
            <person name="Satou M."/>
            <person name="Tamse R."/>
            <person name="Vaysberg M."/>
            <person name="Wallender E.K."/>
            <person name="Wong C."/>
            <person name="Yamamura Y."/>
            <person name="Yuan S."/>
            <person name="Shinozaki K."/>
            <person name="Davis R.W."/>
            <person name="Theologis A."/>
            <person name="Ecker J.R."/>
        </authorList>
    </citation>
    <scope>NUCLEOTIDE SEQUENCE [LARGE SCALE MRNA]</scope>
    <source>
        <strain>cv. Columbia</strain>
    </source>
</reference>
<reference key="5">
    <citation type="submission" date="2002-03" db="EMBL/GenBank/DDBJ databases">
        <title>Full-length cDNA from Arabidopsis thaliana.</title>
        <authorList>
            <person name="Brover V.V."/>
            <person name="Troukhan M.E."/>
            <person name="Alexandrov N.A."/>
            <person name="Lu Y.-P."/>
            <person name="Flavell R.B."/>
            <person name="Feldmann K.A."/>
        </authorList>
    </citation>
    <scope>NUCLEOTIDE SEQUENCE [LARGE SCALE MRNA]</scope>
</reference>
<reference key="6">
    <citation type="journal article" date="2007" name="Plant Cell">
        <title>Arabidopsis BRANCHED1 acts as an integrator of branching signals within axillary buds.</title>
        <authorList>
            <person name="Aguilar-Martinez J.A."/>
            <person name="Poza-Carrion C."/>
            <person name="Cubas P."/>
        </authorList>
    </citation>
    <scope>GENE FAMILY</scope>
    <scope>NOMENCLATURE</scope>
</reference>
<organism>
    <name type="scientific">Arabidopsis thaliana</name>
    <name type="common">Mouse-ear cress</name>
    <dbReference type="NCBI Taxonomy" id="3702"/>
    <lineage>
        <taxon>Eukaryota</taxon>
        <taxon>Viridiplantae</taxon>
        <taxon>Streptophyta</taxon>
        <taxon>Embryophyta</taxon>
        <taxon>Tracheophyta</taxon>
        <taxon>Spermatophyta</taxon>
        <taxon>Magnoliopsida</taxon>
        <taxon>eudicotyledons</taxon>
        <taxon>Gunneridae</taxon>
        <taxon>Pentapetalae</taxon>
        <taxon>rosids</taxon>
        <taxon>malvids</taxon>
        <taxon>Brassicales</taxon>
        <taxon>Brassicaceae</taxon>
        <taxon>Camelineae</taxon>
        <taxon>Arabidopsis</taxon>
    </lineage>
</organism>
<name>TCP19_ARATH</name>
<gene>
    <name type="primary">TCP19</name>
    <name type="ordered locus">At5g51910</name>
    <name type="ORF">MJM18.6</name>
</gene>
<proteinExistence type="evidence at protein level"/>
<dbReference type="EMBL" id="AB025623">
    <property type="protein sequence ID" value="BAA97226.1"/>
    <property type="molecule type" value="Genomic_DNA"/>
</dbReference>
<dbReference type="EMBL" id="CP002688">
    <property type="protein sequence ID" value="AED96144.1"/>
    <property type="molecule type" value="Genomic_DNA"/>
</dbReference>
<dbReference type="EMBL" id="CP002688">
    <property type="protein sequence ID" value="AED96145.1"/>
    <property type="molecule type" value="Genomic_DNA"/>
</dbReference>
<dbReference type="EMBL" id="AK118579">
    <property type="protein sequence ID" value="BAC43179.1"/>
    <property type="molecule type" value="mRNA"/>
</dbReference>
<dbReference type="EMBL" id="BT008779">
    <property type="protein sequence ID" value="AAP68218.1"/>
    <property type="molecule type" value="mRNA"/>
</dbReference>
<dbReference type="EMBL" id="AY086379">
    <property type="protein sequence ID" value="AAM64446.1"/>
    <property type="status" value="ALT_INIT"/>
    <property type="molecule type" value="mRNA"/>
</dbReference>
<dbReference type="RefSeq" id="NP_200004.1">
    <property type="nucleotide sequence ID" value="NM_124570.4"/>
</dbReference>
<dbReference type="RefSeq" id="NP_851173.1">
    <property type="nucleotide sequence ID" value="NM_180842.1"/>
</dbReference>
<dbReference type="SMR" id="Q9LT89"/>
<dbReference type="BioGRID" id="20511">
    <property type="interactions" value="93"/>
</dbReference>
<dbReference type="FunCoup" id="Q9LT89">
    <property type="interactions" value="13"/>
</dbReference>
<dbReference type="IntAct" id="Q9LT89">
    <property type="interactions" value="86"/>
</dbReference>
<dbReference type="STRING" id="3702.Q9LT89"/>
<dbReference type="PaxDb" id="3702-AT5G51910.1"/>
<dbReference type="ProteomicsDB" id="246469"/>
<dbReference type="EnsemblPlants" id="AT5G51910.1">
    <property type="protein sequence ID" value="AT5G51910.1"/>
    <property type="gene ID" value="AT5G51910"/>
</dbReference>
<dbReference type="EnsemblPlants" id="AT5G51910.2">
    <property type="protein sequence ID" value="AT5G51910.2"/>
    <property type="gene ID" value="AT5G51910"/>
</dbReference>
<dbReference type="GeneID" id="835266"/>
<dbReference type="Gramene" id="AT5G51910.1">
    <property type="protein sequence ID" value="AT5G51910.1"/>
    <property type="gene ID" value="AT5G51910"/>
</dbReference>
<dbReference type="Gramene" id="AT5G51910.2">
    <property type="protein sequence ID" value="AT5G51910.2"/>
    <property type="gene ID" value="AT5G51910"/>
</dbReference>
<dbReference type="KEGG" id="ath:AT5G51910"/>
<dbReference type="Araport" id="AT5G51910"/>
<dbReference type="TAIR" id="AT5G51910">
    <property type="gene designation" value="TCP19"/>
</dbReference>
<dbReference type="eggNOG" id="ENOG502RXJ1">
    <property type="taxonomic scope" value="Eukaryota"/>
</dbReference>
<dbReference type="HOGENOM" id="CLU_058546_1_0_1"/>
<dbReference type="InParanoid" id="Q9LT89"/>
<dbReference type="OMA" id="RPCNSEF"/>
<dbReference type="PhylomeDB" id="Q9LT89"/>
<dbReference type="PRO" id="PR:Q9LT89"/>
<dbReference type="Proteomes" id="UP000006548">
    <property type="component" value="Chromosome 5"/>
</dbReference>
<dbReference type="ExpressionAtlas" id="Q9LT89">
    <property type="expression patterns" value="baseline and differential"/>
</dbReference>
<dbReference type="GO" id="GO:0005634">
    <property type="term" value="C:nucleus"/>
    <property type="evidence" value="ECO:0007669"/>
    <property type="project" value="UniProtKB-SubCell"/>
</dbReference>
<dbReference type="GO" id="GO:0003700">
    <property type="term" value="F:DNA-binding transcription factor activity"/>
    <property type="evidence" value="ECO:0000250"/>
    <property type="project" value="TAIR"/>
</dbReference>
<dbReference type="GO" id="GO:0000976">
    <property type="term" value="F:transcription cis-regulatory region binding"/>
    <property type="evidence" value="ECO:0000353"/>
    <property type="project" value="TAIR"/>
</dbReference>
<dbReference type="GO" id="GO:0031347">
    <property type="term" value="P:regulation of defense response"/>
    <property type="evidence" value="ECO:0000315"/>
    <property type="project" value="TAIR"/>
</dbReference>
<dbReference type="GO" id="GO:0006355">
    <property type="term" value="P:regulation of DNA-templated transcription"/>
    <property type="evidence" value="ECO:0000304"/>
    <property type="project" value="TAIR"/>
</dbReference>
<dbReference type="InterPro" id="IPR017887">
    <property type="entry name" value="TF_TCP_subgr"/>
</dbReference>
<dbReference type="InterPro" id="IPR005333">
    <property type="entry name" value="Transcription_factor_TCP"/>
</dbReference>
<dbReference type="PANTHER" id="PTHR31072:SF242">
    <property type="entry name" value="TRANSCRIPTION FACTOR TCP19"/>
    <property type="match status" value="1"/>
</dbReference>
<dbReference type="PANTHER" id="PTHR31072">
    <property type="entry name" value="TRANSCRIPTION FACTOR TCP4-RELATED"/>
    <property type="match status" value="1"/>
</dbReference>
<dbReference type="Pfam" id="PF03634">
    <property type="entry name" value="TCP"/>
    <property type="match status" value="1"/>
</dbReference>
<dbReference type="PROSITE" id="PS51369">
    <property type="entry name" value="TCP"/>
    <property type="match status" value="1"/>
</dbReference>
<protein>
    <recommendedName>
        <fullName>Transcription factor TCP19</fullName>
    </recommendedName>
</protein>
<comment type="interaction">
    <interactant intactId="EBI-4426178">
        <id>Q9LT89</id>
    </interactant>
    <interactant intactId="EBI-15191587">
        <id>F4K1A8</id>
        <label>At5g26749</label>
    </interactant>
    <organismsDiffer>false</organismsDiffer>
    <experiments>3</experiments>
</comment>
<comment type="interaction">
    <interactant intactId="EBI-4426178">
        <id>Q9LT89</id>
    </interactant>
    <interactant intactId="EBI-15194063">
        <id>Q9C9H1</id>
        <label>GIS3</label>
    </interactant>
    <organismsDiffer>false</organismsDiffer>
    <experiments>4</experiments>
</comment>
<comment type="interaction">
    <interactant intactId="EBI-4426178">
        <id>Q9LT89</id>
    </interactant>
    <interactant intactId="EBI-530486">
        <id>P46639</id>
        <label>KNAT1</label>
    </interactant>
    <organismsDiffer>false</organismsDiffer>
    <experiments>3</experiments>
</comment>
<comment type="interaction">
    <interactant intactId="EBI-4426178">
        <id>Q9LT89</id>
    </interactant>
    <interactant intactId="EBI-2363213">
        <id>Q8H1R0</id>
        <label>PYL10</label>
    </interactant>
    <organismsDiffer>false</organismsDiffer>
    <experiments>3</experiments>
</comment>
<comment type="interaction">
    <interactant intactId="EBI-4426178">
        <id>Q9LT89</id>
    </interactant>
    <interactant intactId="EBI-2363233">
        <id>Q9FJ50</id>
        <label>PYL11</label>
    </interactant>
    <organismsDiffer>false</organismsDiffer>
    <experiments>3</experiments>
</comment>
<comment type="interaction">
    <interactant intactId="EBI-4426178">
        <id>Q9LT89</id>
    </interactant>
    <interactant intactId="EBI-2363244">
        <id>Q9FJ49</id>
        <label>PYL12</label>
    </interactant>
    <organismsDiffer>false</organismsDiffer>
    <experiments>3</experiments>
</comment>
<comment type="interaction">
    <interactant intactId="EBI-4426178">
        <id>Q9LT89</id>
    </interactant>
    <interactant intactId="EBI-25515027">
        <id>Q9SN51</id>
        <label>PYL13</label>
    </interactant>
    <organismsDiffer>false</organismsDiffer>
    <experiments>3</experiments>
</comment>
<comment type="interaction">
    <interactant intactId="EBI-4426178">
        <id>Q9LT89</id>
    </interactant>
    <interactant intactId="EBI-2363125">
        <id>O80992</id>
        <label>PYL2</label>
    </interactant>
    <organismsDiffer>false</organismsDiffer>
    <experiments>3</experiments>
</comment>
<comment type="interaction">
    <interactant intactId="EBI-4426178">
        <id>Q9LT89</id>
    </interactant>
    <interactant intactId="EBI-2363144">
        <id>Q9SSM7</id>
        <label>PYL3</label>
    </interactant>
    <organismsDiffer>false</organismsDiffer>
    <experiments>3</experiments>
</comment>
<comment type="interaction">
    <interactant intactId="EBI-4426178">
        <id>Q9LT89</id>
    </interactant>
    <interactant intactId="EBI-2349683">
        <id>O80920</id>
        <label>PYL4</label>
    </interactant>
    <organismsDiffer>false</organismsDiffer>
    <experiments>3</experiments>
</comment>
<comment type="interaction">
    <interactant intactId="EBI-4426178">
        <id>Q9LT89</id>
    </interactant>
    <interactant intactId="EBI-2363181">
        <id>Q9FLB1</id>
        <label>PYL5</label>
    </interactant>
    <organismsDiffer>false</organismsDiffer>
    <experiments>3</experiments>
</comment>
<comment type="interaction">
    <interactant intactId="EBI-4426178">
        <id>Q9LT89</id>
    </interactant>
    <interactant intactId="EBI-2363192">
        <id>Q8S8E3</id>
        <label>PYL6</label>
    </interactant>
    <organismsDiffer>false</organismsDiffer>
    <experiments>3</experiments>
</comment>
<comment type="interaction">
    <interactant intactId="EBI-4426178">
        <id>Q9LT89</id>
    </interactant>
    <interactant intactId="EBI-2363203">
        <id>Q1ECF1</id>
        <label>PYL7</label>
    </interactant>
    <organismsDiffer>false</organismsDiffer>
    <experiments>3</experiments>
</comment>
<comment type="interaction">
    <interactant intactId="EBI-4426178">
        <id>Q9LT89</id>
    </interactant>
    <interactant intactId="EBI-2429535">
        <id>Q9FGM1</id>
        <label>PYL8</label>
    </interactant>
    <organismsDiffer>false</organismsDiffer>
    <experiments>3</experiments>
</comment>
<comment type="interaction">
    <interactant intactId="EBI-4426178">
        <id>Q9LT89</id>
    </interactant>
    <interactant intactId="EBI-2349513">
        <id>Q84MC7</id>
        <label>PYL9</label>
    </interactant>
    <organismsDiffer>false</organismsDiffer>
    <experiments>3</experiments>
</comment>
<comment type="interaction">
    <interactant intactId="EBI-4426178">
        <id>Q9LT89</id>
    </interactant>
    <interactant intactId="EBI-2349590">
        <id>O49686</id>
        <label>PYR1</label>
    </interactant>
    <organismsDiffer>false</organismsDiffer>
    <experiments>3</experiments>
</comment>
<comment type="interaction">
    <interactant intactId="EBI-4426178">
        <id>Q9LT89</id>
    </interactant>
    <interactant intactId="EBI-4426168">
        <id>Q9FTA2</id>
        <label>TCP21</label>
    </interactant>
    <organismsDiffer>false</organismsDiffer>
    <experiments>3</experiments>
</comment>
<comment type="interaction">
    <interactant intactId="EBI-4426178">
        <id>Q9LT89</id>
    </interactant>
    <interactant intactId="EBI-15192677">
        <id>Q9FMX2</id>
        <label>TCP7</label>
    </interactant>
    <organismsDiffer>false</organismsDiffer>
    <experiments>3</experiments>
</comment>
<comment type="subcellular location">
    <subcellularLocation>
        <location evidence="3">Nucleus</location>
    </subcellularLocation>
</comment>
<comment type="sequence caution" evidence="3">
    <conflict type="erroneous initiation">
        <sequence resource="EMBL-CDS" id="AAM64446"/>
    </conflict>
</comment>
<accession>Q9LT89</accession>
<accession>Q8LCV9</accession>
<sequence length="293" mass="31460">MESNHEGNAIQVIDQVTTMTHLSDPNPKTKPGMMLMKQEDGYLQPVKTKPAPKRPTSKDRHTKVEGRGRRIRMPAGCAARVFQLTRELGHKSDGETIRWLLERAEPAIIEATGTGTVPAIAVSVNGTLKIPTSSPVLNDGGRDGDGDLIKKRRKRNCTSDFVDVNDSCHSSVTSGLAPITASNYGVNILNVNTQGFVPFWPMGMGTAFVTGGPDQMGQMWAIPTVATAPFLNVGARPVSSYVSNASDAEAEMETSGGGTTQPLRDFSLEIYDKRELQFLGGSGNSSPSSCHET</sequence>